<proteinExistence type="inferred from homology"/>
<protein>
    <recommendedName>
        <fullName evidence="1">3-ketoacyl-CoA thiolase</fullName>
        <ecNumber evidence="1">2.3.1.16</ecNumber>
    </recommendedName>
    <alternativeName>
        <fullName evidence="1">Acetyl-CoA acyltransferase</fullName>
    </alternativeName>
    <alternativeName>
        <fullName evidence="1">Beta-ketothiolase</fullName>
    </alternativeName>
    <alternativeName>
        <fullName evidence="1">Fatty acid oxidation complex subunit beta</fullName>
    </alternativeName>
</protein>
<sequence>MSLNPRDVVIVDFGRTPMGRSKGGMHRNTRAEDMSAHLISKLLERNDKVDPKEVEDVIWGCVNQTLEQGWNIARMASLMTPIPHTSAAQTVSRLCGSSMSALHTAAQAIMTGNGDVFVIGGVEHMGHVSMMHGVDPNPHLSLHAAKASGMMGLTAEMLGKMHGITREQQDLFGVRSHQLAHKATVEGKFKDEIIPMQGYDENGFLKVFDFDETIRPETTLEGLASLKPAFNPKGGTVTAGTSSQITDGASCMIVMSGQRAMDLGIQPLAVIRSMAVAGVDPAIMGYGPVPSTQKALKRAGLTMADIDFIELNEAFAAQALPVLKDLKVLDKMDEKVNLHGGAIALGHPFGCSGARISGTLLNVMKQNGGTLGVATMCVGLGQGITTVFERV</sequence>
<comment type="function">
    <text evidence="1">Catalyzes the final step of fatty acid oxidation in which acetyl-CoA is released and the CoA ester of a fatty acid two carbons shorter is formed.</text>
</comment>
<comment type="catalytic activity">
    <reaction evidence="1">
        <text>an acyl-CoA + acetyl-CoA = a 3-oxoacyl-CoA + CoA</text>
        <dbReference type="Rhea" id="RHEA:21564"/>
        <dbReference type="ChEBI" id="CHEBI:57287"/>
        <dbReference type="ChEBI" id="CHEBI:57288"/>
        <dbReference type="ChEBI" id="CHEBI:58342"/>
        <dbReference type="ChEBI" id="CHEBI:90726"/>
        <dbReference type="EC" id="2.3.1.16"/>
    </reaction>
</comment>
<comment type="pathway">
    <text evidence="1">Lipid metabolism; fatty acid beta-oxidation.</text>
</comment>
<comment type="subunit">
    <text evidence="1">Heterotetramer of two alpha chains (FadB) and two beta chains (FadA).</text>
</comment>
<comment type="subcellular location">
    <subcellularLocation>
        <location evidence="1">Cytoplasm</location>
    </subcellularLocation>
</comment>
<comment type="similarity">
    <text evidence="1">Belongs to the thiolase-like superfamily. Thiolase family.</text>
</comment>
<name>FADA_PSEPU</name>
<evidence type="ECO:0000255" key="1">
    <source>
        <dbReference type="HAMAP-Rule" id="MF_01620"/>
    </source>
</evidence>
<feature type="chain" id="PRO_0000206382" description="3-ketoacyl-CoA thiolase">
    <location>
        <begin position="1"/>
        <end position="391"/>
    </location>
</feature>
<feature type="active site" description="Acyl-thioester intermediate" evidence="1">
    <location>
        <position position="95"/>
    </location>
</feature>
<feature type="active site" description="Proton acceptor" evidence="1">
    <location>
        <position position="347"/>
    </location>
</feature>
<feature type="active site" description="Proton acceptor" evidence="1">
    <location>
        <position position="377"/>
    </location>
</feature>
<gene>
    <name evidence="1" type="primary">fadA</name>
</gene>
<organism>
    <name type="scientific">Pseudomonas putida</name>
    <name type="common">Arthrobacter siderocapsulatus</name>
    <dbReference type="NCBI Taxonomy" id="303"/>
    <lineage>
        <taxon>Bacteria</taxon>
        <taxon>Pseudomonadati</taxon>
        <taxon>Pseudomonadota</taxon>
        <taxon>Gammaproteobacteria</taxon>
        <taxon>Pseudomonadales</taxon>
        <taxon>Pseudomonadaceae</taxon>
        <taxon>Pseudomonas</taxon>
    </lineage>
</organism>
<reference key="1">
    <citation type="journal article" date="1999" name="J. Biol. Chem.">
        <title>Novel biodegradable aromatic plastics from a bacterial source. Genetic and biochemical studies on a route of the phenylacetyl-CoA catabolon.</title>
        <authorList>
            <person name="Garcia B."/>
            <person name="Olivera E.R."/>
            <person name="Minambres B."/>
            <person name="Fernandez-Valverde M."/>
            <person name="Canedo L.M."/>
            <person name="Prieto M.A."/>
            <person name="Garcia J.L."/>
            <person name="Martinez M."/>
            <person name="Luengo J.M."/>
        </authorList>
    </citation>
    <scope>NUCLEOTIDE SEQUENCE [GENOMIC DNA]</scope>
    <source>
        <strain>U</strain>
    </source>
</reference>
<reference key="2">
    <citation type="journal article" date="2001" name="Mol. Microbiol.">
        <title>Two different pathways are involved in the beta-oxidation of n-alkanoic and n-phenylalkanoic acids in Pseudomonas putida U: genetic studies and biotechnological applications.</title>
        <authorList>
            <person name="Olivera E.R."/>
            <person name="Carnicero D."/>
            <person name="Garcia B."/>
            <person name="Minambres B."/>
            <person name="Moreno M.A."/>
            <person name="Canedo L."/>
            <person name="Dirusso C.C."/>
            <person name="Naharro G."/>
            <person name="Luengo J.M."/>
        </authorList>
    </citation>
    <scope>NUCLEOTIDE SEQUENCE [GENOMIC DNA]</scope>
    <source>
        <strain>U</strain>
    </source>
</reference>
<accession>Q9R9W0</accession>
<keyword id="KW-0012">Acyltransferase</keyword>
<keyword id="KW-0963">Cytoplasm</keyword>
<keyword id="KW-0276">Fatty acid metabolism</keyword>
<keyword id="KW-0442">Lipid degradation</keyword>
<keyword id="KW-0443">Lipid metabolism</keyword>
<keyword id="KW-0808">Transferase</keyword>
<dbReference type="EC" id="2.3.1.16" evidence="1"/>
<dbReference type="EMBL" id="AF150672">
    <property type="protein sequence ID" value="AAF02534.1"/>
    <property type="molecule type" value="Genomic_DNA"/>
</dbReference>
<dbReference type="EMBL" id="AF290949">
    <property type="protein sequence ID" value="AAK18168.1"/>
    <property type="molecule type" value="Genomic_DNA"/>
</dbReference>
<dbReference type="RefSeq" id="WP_016500745.1">
    <property type="nucleotide sequence ID" value="NZ_WOWR01000052.1"/>
</dbReference>
<dbReference type="SMR" id="Q9R9W0"/>
<dbReference type="GeneID" id="45525197"/>
<dbReference type="eggNOG" id="COG0183">
    <property type="taxonomic scope" value="Bacteria"/>
</dbReference>
<dbReference type="OrthoDB" id="8951704at2"/>
<dbReference type="UniPathway" id="UPA00659"/>
<dbReference type="GO" id="GO:0005737">
    <property type="term" value="C:cytoplasm"/>
    <property type="evidence" value="ECO:0007669"/>
    <property type="project" value="UniProtKB-SubCell"/>
</dbReference>
<dbReference type="GO" id="GO:0003988">
    <property type="term" value="F:acetyl-CoA C-acyltransferase activity"/>
    <property type="evidence" value="ECO:0007669"/>
    <property type="project" value="UniProtKB-UniRule"/>
</dbReference>
<dbReference type="GO" id="GO:0006635">
    <property type="term" value="P:fatty acid beta-oxidation"/>
    <property type="evidence" value="ECO:0007669"/>
    <property type="project" value="UniProtKB-UniRule"/>
</dbReference>
<dbReference type="GO" id="GO:0010124">
    <property type="term" value="P:phenylacetate catabolic process"/>
    <property type="evidence" value="ECO:0007669"/>
    <property type="project" value="TreeGrafter"/>
</dbReference>
<dbReference type="CDD" id="cd00751">
    <property type="entry name" value="thiolase"/>
    <property type="match status" value="1"/>
</dbReference>
<dbReference type="FunFam" id="3.40.47.10:FF:000010">
    <property type="entry name" value="Acetyl-CoA acetyltransferase (Thiolase)"/>
    <property type="match status" value="1"/>
</dbReference>
<dbReference type="Gene3D" id="3.40.47.10">
    <property type="match status" value="2"/>
</dbReference>
<dbReference type="HAMAP" id="MF_01620">
    <property type="entry name" value="FadA"/>
    <property type="match status" value="1"/>
</dbReference>
<dbReference type="InterPro" id="IPR012805">
    <property type="entry name" value="FadA"/>
</dbReference>
<dbReference type="InterPro" id="IPR002155">
    <property type="entry name" value="Thiolase"/>
</dbReference>
<dbReference type="InterPro" id="IPR016039">
    <property type="entry name" value="Thiolase-like"/>
</dbReference>
<dbReference type="InterPro" id="IPR050215">
    <property type="entry name" value="Thiolase-like_sf_Thiolase"/>
</dbReference>
<dbReference type="InterPro" id="IPR020615">
    <property type="entry name" value="Thiolase_acyl_enz_int_AS"/>
</dbReference>
<dbReference type="InterPro" id="IPR020617">
    <property type="entry name" value="Thiolase_C"/>
</dbReference>
<dbReference type="InterPro" id="IPR020613">
    <property type="entry name" value="Thiolase_CS"/>
</dbReference>
<dbReference type="InterPro" id="IPR020616">
    <property type="entry name" value="Thiolase_N"/>
</dbReference>
<dbReference type="NCBIfam" id="TIGR01930">
    <property type="entry name" value="AcCoA-C-Actrans"/>
    <property type="match status" value="1"/>
</dbReference>
<dbReference type="NCBIfam" id="TIGR02445">
    <property type="entry name" value="fadA"/>
    <property type="match status" value="1"/>
</dbReference>
<dbReference type="NCBIfam" id="NF006510">
    <property type="entry name" value="PRK08947.1"/>
    <property type="match status" value="1"/>
</dbReference>
<dbReference type="PANTHER" id="PTHR43853:SF11">
    <property type="entry name" value="3-KETOACYL-COA THIOLASE FADA"/>
    <property type="match status" value="1"/>
</dbReference>
<dbReference type="PANTHER" id="PTHR43853">
    <property type="entry name" value="3-KETOACYL-COA THIOLASE, PEROXISOMAL"/>
    <property type="match status" value="1"/>
</dbReference>
<dbReference type="Pfam" id="PF02803">
    <property type="entry name" value="Thiolase_C"/>
    <property type="match status" value="1"/>
</dbReference>
<dbReference type="Pfam" id="PF00108">
    <property type="entry name" value="Thiolase_N"/>
    <property type="match status" value="1"/>
</dbReference>
<dbReference type="PIRSF" id="PIRSF000429">
    <property type="entry name" value="Ac-CoA_Ac_transf"/>
    <property type="match status" value="1"/>
</dbReference>
<dbReference type="SUPFAM" id="SSF53901">
    <property type="entry name" value="Thiolase-like"/>
    <property type="match status" value="2"/>
</dbReference>
<dbReference type="PROSITE" id="PS00098">
    <property type="entry name" value="THIOLASE_1"/>
    <property type="match status" value="1"/>
</dbReference>
<dbReference type="PROSITE" id="PS00737">
    <property type="entry name" value="THIOLASE_2"/>
    <property type="match status" value="1"/>
</dbReference>